<gene>
    <name evidence="1" type="primary">apt</name>
    <name type="ordered locus">Dred_0732</name>
</gene>
<proteinExistence type="inferred from homology"/>
<reference key="1">
    <citation type="submission" date="2007-03" db="EMBL/GenBank/DDBJ databases">
        <title>Complete sequence of Desulfotomaculum reducens MI-1.</title>
        <authorList>
            <consortium name="US DOE Joint Genome Institute"/>
            <person name="Copeland A."/>
            <person name="Lucas S."/>
            <person name="Lapidus A."/>
            <person name="Barry K."/>
            <person name="Detter J.C."/>
            <person name="Glavina del Rio T."/>
            <person name="Hammon N."/>
            <person name="Israni S."/>
            <person name="Dalin E."/>
            <person name="Tice H."/>
            <person name="Pitluck S."/>
            <person name="Sims D."/>
            <person name="Brettin T."/>
            <person name="Bruce D."/>
            <person name="Han C."/>
            <person name="Tapia R."/>
            <person name="Schmutz J."/>
            <person name="Larimer F."/>
            <person name="Land M."/>
            <person name="Hauser L."/>
            <person name="Kyrpides N."/>
            <person name="Kim E."/>
            <person name="Tebo B.M."/>
            <person name="Richardson P."/>
        </authorList>
    </citation>
    <scope>NUCLEOTIDE SEQUENCE [LARGE SCALE GENOMIC DNA]</scope>
    <source>
        <strain>ATCC BAA-1160 / DSM 100696 / MI-1</strain>
    </source>
</reference>
<evidence type="ECO:0000255" key="1">
    <source>
        <dbReference type="HAMAP-Rule" id="MF_00004"/>
    </source>
</evidence>
<accession>A4J2G8</accession>
<keyword id="KW-0963">Cytoplasm</keyword>
<keyword id="KW-0328">Glycosyltransferase</keyword>
<keyword id="KW-0660">Purine salvage</keyword>
<keyword id="KW-1185">Reference proteome</keyword>
<keyword id="KW-0808">Transferase</keyword>
<name>APT_DESRM</name>
<dbReference type="EC" id="2.4.2.7" evidence="1"/>
<dbReference type="EMBL" id="CP000612">
    <property type="protein sequence ID" value="ABO49271.1"/>
    <property type="molecule type" value="Genomic_DNA"/>
</dbReference>
<dbReference type="RefSeq" id="WP_011877107.1">
    <property type="nucleotide sequence ID" value="NC_009253.1"/>
</dbReference>
<dbReference type="SMR" id="A4J2G8"/>
<dbReference type="STRING" id="349161.Dred_0732"/>
<dbReference type="KEGG" id="drm:Dred_0732"/>
<dbReference type="eggNOG" id="COG0503">
    <property type="taxonomic scope" value="Bacteria"/>
</dbReference>
<dbReference type="HOGENOM" id="CLU_063339_3_0_9"/>
<dbReference type="OrthoDB" id="9803963at2"/>
<dbReference type="UniPathway" id="UPA00588">
    <property type="reaction ID" value="UER00646"/>
</dbReference>
<dbReference type="Proteomes" id="UP000001556">
    <property type="component" value="Chromosome"/>
</dbReference>
<dbReference type="GO" id="GO:0005737">
    <property type="term" value="C:cytoplasm"/>
    <property type="evidence" value="ECO:0007669"/>
    <property type="project" value="UniProtKB-SubCell"/>
</dbReference>
<dbReference type="GO" id="GO:0003999">
    <property type="term" value="F:adenine phosphoribosyltransferase activity"/>
    <property type="evidence" value="ECO:0007669"/>
    <property type="project" value="UniProtKB-UniRule"/>
</dbReference>
<dbReference type="GO" id="GO:0006168">
    <property type="term" value="P:adenine salvage"/>
    <property type="evidence" value="ECO:0007669"/>
    <property type="project" value="InterPro"/>
</dbReference>
<dbReference type="GO" id="GO:0044209">
    <property type="term" value="P:AMP salvage"/>
    <property type="evidence" value="ECO:0007669"/>
    <property type="project" value="UniProtKB-UniRule"/>
</dbReference>
<dbReference type="GO" id="GO:0006166">
    <property type="term" value="P:purine ribonucleoside salvage"/>
    <property type="evidence" value="ECO:0007669"/>
    <property type="project" value="UniProtKB-KW"/>
</dbReference>
<dbReference type="CDD" id="cd06223">
    <property type="entry name" value="PRTases_typeI"/>
    <property type="match status" value="1"/>
</dbReference>
<dbReference type="FunFam" id="3.40.50.2020:FF:000021">
    <property type="entry name" value="Adenine phosphoribosyltransferase"/>
    <property type="match status" value="1"/>
</dbReference>
<dbReference type="Gene3D" id="3.40.50.2020">
    <property type="match status" value="1"/>
</dbReference>
<dbReference type="HAMAP" id="MF_00004">
    <property type="entry name" value="Aden_phosphoribosyltr"/>
    <property type="match status" value="1"/>
</dbReference>
<dbReference type="InterPro" id="IPR005764">
    <property type="entry name" value="Ade_phspho_trans"/>
</dbReference>
<dbReference type="InterPro" id="IPR050120">
    <property type="entry name" value="Adenine_PRTase"/>
</dbReference>
<dbReference type="InterPro" id="IPR000836">
    <property type="entry name" value="PRibTrfase_dom"/>
</dbReference>
<dbReference type="InterPro" id="IPR029057">
    <property type="entry name" value="PRTase-like"/>
</dbReference>
<dbReference type="NCBIfam" id="TIGR01090">
    <property type="entry name" value="apt"/>
    <property type="match status" value="1"/>
</dbReference>
<dbReference type="NCBIfam" id="NF002633">
    <property type="entry name" value="PRK02304.1-2"/>
    <property type="match status" value="1"/>
</dbReference>
<dbReference type="NCBIfam" id="NF002634">
    <property type="entry name" value="PRK02304.1-3"/>
    <property type="match status" value="1"/>
</dbReference>
<dbReference type="NCBIfam" id="NF002636">
    <property type="entry name" value="PRK02304.1-5"/>
    <property type="match status" value="1"/>
</dbReference>
<dbReference type="PANTHER" id="PTHR11776">
    <property type="entry name" value="ADENINE PHOSPHORIBOSYLTRANSFERASE"/>
    <property type="match status" value="1"/>
</dbReference>
<dbReference type="PANTHER" id="PTHR11776:SF7">
    <property type="entry name" value="PHOSPHORIBOSYLTRANSFERASE DOMAIN-CONTAINING PROTEIN"/>
    <property type="match status" value="1"/>
</dbReference>
<dbReference type="Pfam" id="PF00156">
    <property type="entry name" value="Pribosyltran"/>
    <property type="match status" value="1"/>
</dbReference>
<dbReference type="SUPFAM" id="SSF53271">
    <property type="entry name" value="PRTase-like"/>
    <property type="match status" value="1"/>
</dbReference>
<dbReference type="PROSITE" id="PS00103">
    <property type="entry name" value="PUR_PYR_PR_TRANSFER"/>
    <property type="match status" value="1"/>
</dbReference>
<feature type="chain" id="PRO_0000329344" description="Adenine phosphoribosyltransferase">
    <location>
        <begin position="1"/>
        <end position="172"/>
    </location>
</feature>
<protein>
    <recommendedName>
        <fullName evidence="1">Adenine phosphoribosyltransferase</fullName>
        <shortName evidence="1">APRT</shortName>
        <ecNumber evidence="1">2.4.2.7</ecNumber>
    </recommendedName>
</protein>
<comment type="function">
    <text evidence="1">Catalyzes a salvage reaction resulting in the formation of AMP, that is energically less costly than de novo synthesis.</text>
</comment>
<comment type="catalytic activity">
    <reaction evidence="1">
        <text>AMP + diphosphate = 5-phospho-alpha-D-ribose 1-diphosphate + adenine</text>
        <dbReference type="Rhea" id="RHEA:16609"/>
        <dbReference type="ChEBI" id="CHEBI:16708"/>
        <dbReference type="ChEBI" id="CHEBI:33019"/>
        <dbReference type="ChEBI" id="CHEBI:58017"/>
        <dbReference type="ChEBI" id="CHEBI:456215"/>
        <dbReference type="EC" id="2.4.2.7"/>
    </reaction>
</comment>
<comment type="pathway">
    <text evidence="1">Purine metabolism; AMP biosynthesis via salvage pathway; AMP from adenine: step 1/1.</text>
</comment>
<comment type="subunit">
    <text evidence="1">Homodimer.</text>
</comment>
<comment type="subcellular location">
    <subcellularLocation>
        <location evidence="1">Cytoplasm</location>
    </subcellularLocation>
</comment>
<comment type="similarity">
    <text evidence="1">Belongs to the purine/pyrimidine phosphoribosyltransferase family.</text>
</comment>
<sequence length="172" mass="18336">MDFSSKIRLIKDFPKPGINFRDITTLLQDAKAFKQAVDAMVGLCKDFDVDVIACPEARGFVLGAPMAYAMGKGLVLLRKPGKLPGKAVSHSYQLEYGMDSLEVHEGAILPGHKVLLVDDVLATGGTVAAGVELIKKTGGEVVGIAFLIELLGLNARDKLGNYPVVTLLQLDA</sequence>
<organism>
    <name type="scientific">Desulforamulus reducens (strain ATCC BAA-1160 / DSM 100696 / MI-1)</name>
    <name type="common">Desulfotomaculum reducens</name>
    <dbReference type="NCBI Taxonomy" id="349161"/>
    <lineage>
        <taxon>Bacteria</taxon>
        <taxon>Bacillati</taxon>
        <taxon>Bacillota</taxon>
        <taxon>Clostridia</taxon>
        <taxon>Eubacteriales</taxon>
        <taxon>Peptococcaceae</taxon>
        <taxon>Desulforamulus</taxon>
    </lineage>
</organism>